<protein>
    <recommendedName>
        <fullName evidence="6">DNA-binding protein HMf-2</fullName>
    </recommendedName>
    <alternativeName>
        <fullName>Archaeal histone B</fullName>
    </alternativeName>
</protein>
<gene>
    <name evidence="7" type="primary">hmfB</name>
</gene>
<evidence type="ECO:0000269" key="1">
    <source>
    </source>
</evidence>
<evidence type="ECO:0000269" key="2">
    <source>
    </source>
</evidence>
<evidence type="ECO:0000269" key="3">
    <source>
    </source>
</evidence>
<evidence type="ECO:0000269" key="4">
    <source>
    </source>
</evidence>
<evidence type="ECO:0000269" key="5">
    <source>
    </source>
</evidence>
<evidence type="ECO:0000303" key="6">
    <source>
    </source>
</evidence>
<evidence type="ECO:0000303" key="7">
    <source>
    </source>
</evidence>
<evidence type="ECO:0000305" key="8"/>
<evidence type="ECO:0000305" key="9">
    <source>
    </source>
</evidence>
<evidence type="ECO:0000305" key="10">
    <source>
    </source>
</evidence>
<evidence type="ECO:0007744" key="11">
    <source>
        <dbReference type="PDB" id="1A7W"/>
    </source>
</evidence>
<evidence type="ECO:0007744" key="12">
    <source>
        <dbReference type="PDB" id="1B6W"/>
    </source>
</evidence>
<evidence type="ECO:0007744" key="13">
    <source>
        <dbReference type="PDB" id="5T5K"/>
    </source>
</evidence>
<evidence type="ECO:0007829" key="14">
    <source>
        <dbReference type="PDB" id="1A7W"/>
    </source>
</evidence>
<feature type="chain" id="PRO_0000154983" description="DNA-binding protein HMf-2">
    <location>
        <begin position="1"/>
        <end position="69"/>
    </location>
</feature>
<feature type="region of interest" description="Interaction with DNA" evidence="4">
    <location>
        <begin position="19"/>
        <end position="21"/>
    </location>
</feature>
<feature type="region of interest" description="Interaction with DNA" evidence="4">
    <location>
        <begin position="53"/>
        <end position="56"/>
    </location>
</feature>
<feature type="site" description="Interaction with DNA" evidence="4">
    <location>
        <position position="13"/>
    </location>
</feature>
<feature type="mutagenesis site" description="Loss of formation of nucleosome-like structures with DNA." evidence="1">
    <original>R</original>
    <variation>S</variation>
    <location>
        <position position="10"/>
    </location>
</feature>
<feature type="mutagenesis site" description="Loss of formation of nucleosome-like structures with DNA." evidence="1">
    <original>K</original>
    <variation>E</variation>
    <variation>Q</variation>
    <variation>T</variation>
    <location>
        <position position="13"/>
    </location>
</feature>
<feature type="mutagenesis site" description="Loss of formation of nucleosome-like structures with DNA." evidence="1">
    <original>R</original>
    <variation>I</variation>
    <variation>Q</variation>
    <variation>S</variation>
    <location>
        <position position="19"/>
    </location>
</feature>
<feature type="mutagenesis site" description="Loss of formation of nucleosome-like structures with DNA." evidence="1">
    <original>V</original>
    <variation>C</variation>
    <location>
        <position position="20"/>
    </location>
</feature>
<feature type="mutagenesis site" description="No effect on formation of nucleosome-like structures with DNA." evidence="1">
    <original>R</original>
    <variation>K</variation>
    <location>
        <position position="52"/>
    </location>
</feature>
<feature type="mutagenesis site" description="Loss of formation of nucleosome-like structures with DNA." evidence="1">
    <original>K</original>
    <variation>E</variation>
    <variation>T</variation>
    <location>
        <position position="53"/>
    </location>
</feature>
<feature type="mutagenesis site" description="Loss of formation of nucleosome-like structures with DNA." evidence="1">
    <original>T</original>
    <variation>A</variation>
    <variation>C</variation>
    <variation>K</variation>
    <variation>R</variation>
    <variation>S</variation>
    <variation>V</variation>
    <variation>Y</variation>
    <location>
        <position position="54"/>
    </location>
</feature>
<feature type="mutagenesis site" description="Loss of formation of nucleosome-like structures with DNA." evidence="1">
    <original>K</original>
    <variation>E</variation>
    <variation>T</variation>
    <location>
        <position position="56"/>
    </location>
</feature>
<feature type="helix" evidence="14">
    <location>
        <begin position="5"/>
        <end position="14"/>
    </location>
</feature>
<feature type="helix" evidence="14">
    <location>
        <begin position="22"/>
        <end position="49"/>
    </location>
</feature>
<feature type="helix" evidence="14">
    <location>
        <begin position="57"/>
        <end position="65"/>
    </location>
</feature>
<sequence length="69" mass="7667">MELPIAPIGRIIKDAGAERVSDDARITLAKILEEMGRDIASEAIKLARHAGRKTIKAEDIELAVRRFKK</sequence>
<reference key="1">
    <citation type="journal article" date="1990" name="Proc. Natl. Acad. Sci. U.S.A.">
        <title>HMf, a DNA-binding protein isolated from the hyperthermophilic archaeon Methanothermus fervidus, is most closely related to histones.</title>
        <authorList>
            <person name="Sandman K.M."/>
            <person name="Krzycki J.A."/>
            <person name="Dobrinski B."/>
            <person name="Lurz R."/>
            <person name="Reeve J.N."/>
        </authorList>
    </citation>
    <scope>NUCLEOTIDE SEQUENCE [GENOMIC DNA]</scope>
    <scope>PROTEIN SEQUENCE OF 1-50</scope>
    <scope>FUNCTION</scope>
    <scope>SUBUNIT</scope>
    <scope>SUBCELLULAR LOCATION</scope>
</reference>
<reference key="2">
    <citation type="journal article" date="1994" name="Proc. Natl. Acad. Sci. U.S.A.">
        <title>Growth-phase-dependent synthesis of histones in the archaeon Methanothermus fervidus.</title>
        <authorList>
            <person name="Sandman K.M."/>
            <person name="Grayling R.A."/>
            <person name="Dobrinski B."/>
            <person name="Lurz R."/>
            <person name="Reeve J.N."/>
        </authorList>
    </citation>
    <scope>FUNCTION</scope>
    <scope>SUBCELLULAR LOCATION</scope>
    <scope>SUBUNIT</scope>
    <scope>INDUCTION</scope>
</reference>
<reference key="3">
    <citation type="journal article" date="2000" name="J. Mol. Biol.">
        <title>Mutational analysis of archaeal histone-DNA interactions.</title>
        <authorList>
            <person name="Soares D.J."/>
            <person name="Sandman K."/>
            <person name="Reeve J.N."/>
        </authorList>
    </citation>
    <scope>FUNCTION</scope>
    <scope>SUBUNIT</scope>
    <scope>MUTAGENESIS OF ARG-10; LYS-13; ARG-19; VAL-20; ARG-52; LYS-53; THR-54 AND LYS-56</scope>
</reference>
<reference key="4">
    <citation type="journal article" date="1996" name="Proteins">
        <title>Crystallization and preliminary X-ray characterization of the Methanothermus fervidus histones HMfA and HMfB.</title>
        <authorList>
            <person name="Decanniere K."/>
            <person name="Sandman K."/>
            <person name="Reeve J.N."/>
            <person name="Heinemann U."/>
        </authorList>
    </citation>
    <scope>CRYSTALLIZATION</scope>
</reference>
<reference key="5">
    <citation type="journal article" date="1996" name="J. Mol. Biol.">
        <title>NMR structure of HMfB from the hyperthermophile, Methanothermus fervidus, confirms that this archaeal protein is a histone.</title>
        <authorList>
            <person name="Starich M.R."/>
            <person name="Sandman K.M."/>
            <person name="Reeve J.N."/>
            <person name="Summers M.F."/>
        </authorList>
    </citation>
    <scope>STRUCTURE BY NMR</scope>
</reference>
<reference evidence="11 12" key="6">
    <citation type="journal article" date="2000" name="J. Mol. Biol.">
        <title>Crystal structures of recombinant histones HMfA and HMfB from the hyperthermophilic archaeon Methanothermus fervidus.</title>
        <authorList>
            <person name="Decanniere K."/>
            <person name="Babu A.M."/>
            <person name="Sandman K."/>
            <person name="Reeve J.N."/>
            <person name="Heinemann U."/>
        </authorList>
    </citation>
    <scope>X-RAY CRYSTALLOGRAPHY (1.55 ANGSTROMS)</scope>
    <scope>SUBUNIT</scope>
</reference>
<reference evidence="13" key="7">
    <citation type="journal article" date="2017" name="Science">
        <title>Structure of histone-based chromatin in Archaea.</title>
        <authorList>
            <person name="Mattiroli F."/>
            <person name="Bhattacharyya S."/>
            <person name="Dyer P.N."/>
            <person name="White A.E."/>
            <person name="Sandman K."/>
            <person name="Burkhart B.W."/>
            <person name="Byrne K.R."/>
            <person name="Lee T."/>
            <person name="Ahn N.G."/>
            <person name="Santangelo T.J."/>
            <person name="Reeve J.N."/>
            <person name="Luger K."/>
        </authorList>
    </citation>
    <scope>X-RAY CRYSTALLOGRAPHY (4.00 ANGSTROMS) IN COMPLEX WITH DNA</scope>
    <scope>SUBUNIT</scope>
    <scope>FUNCTION</scope>
</reference>
<keyword id="KW-0002">3D-structure</keyword>
<keyword id="KW-0158">Chromosome</keyword>
<keyword id="KW-0963">Cytoplasm</keyword>
<keyword id="KW-0903">Direct protein sequencing</keyword>
<keyword id="KW-0238">DNA-binding</keyword>
<accession>P19267</accession>
<comment type="function">
    <text evidence="1 3 4 5">Binds and compacts DNA (95 to 150 base pairs) to form nucleosome-like structures that contain positive DNA supercoils (PubMed:10704305, PubMed:2377617, PubMed:28798133, PubMed:7809089). Increases the resistance of DNA to thermal denaturation in vitro (PubMed:2377617).</text>
</comment>
<comment type="subunit">
    <text evidence="1 2 3 4 5">Homodimer and heterodimer of HmfA and HmfB (PubMed:10704305, PubMed:11021968, PubMed:2377617, PubMed:28798133, PubMed:7809089). Heterodimers may be formed primarily when cells enter stationary growth (PubMed:7809089). Dimers then assemble into higher oligomers, with the DNA wrapped around the protein core (PubMed:28798133). Higher order oligomerization of these structures can give rise to long, superhelical fibers (in vitro) (PubMed:28798133).</text>
</comment>
<comment type="subcellular location">
    <subcellularLocation>
        <location evidence="9">Cytoplasm</location>
    </subcellularLocation>
    <subcellularLocation>
        <location evidence="9 10">Chromosome</location>
    </subcellularLocation>
</comment>
<comment type="induction">
    <text evidence="5">Expression is relatively low during exponential growth, and is higher during the stationary phase.</text>
</comment>
<comment type="similarity">
    <text evidence="8">Belongs to the archaeal histone HMF family.</text>
</comment>
<name>HMFB_METFE</name>
<dbReference type="EMBL" id="M34778">
    <property type="protein sequence ID" value="AAA72080.1"/>
    <property type="molecule type" value="Genomic_DNA"/>
</dbReference>
<dbReference type="PIR" id="A35959">
    <property type="entry name" value="A35959"/>
</dbReference>
<dbReference type="PDB" id="1A7W">
    <property type="method" value="X-ray"/>
    <property type="resolution" value="1.55 A"/>
    <property type="chains" value="A=1-69"/>
</dbReference>
<dbReference type="PDB" id="1B6W">
    <property type="method" value="X-ray"/>
    <property type="resolution" value="2.05 A"/>
    <property type="chains" value="A=1-69"/>
</dbReference>
<dbReference type="PDB" id="1BFM">
    <property type="method" value="NMR"/>
    <property type="chains" value="A/B=1-69"/>
</dbReference>
<dbReference type="PDB" id="5T5K">
    <property type="method" value="X-ray"/>
    <property type="resolution" value="4.00 A"/>
    <property type="chains" value="A/B/C/D/E/F=1-69"/>
</dbReference>
<dbReference type="PDBsum" id="1A7W"/>
<dbReference type="PDBsum" id="1B6W"/>
<dbReference type="PDBsum" id="1BFM"/>
<dbReference type="PDBsum" id="5T5K"/>
<dbReference type="SMR" id="P19267"/>
<dbReference type="DIP" id="DIP-60390N"/>
<dbReference type="OMA" id="RILRCIP"/>
<dbReference type="EvolutionaryTrace" id="P19267"/>
<dbReference type="GO" id="GO:0005694">
    <property type="term" value="C:chromosome"/>
    <property type="evidence" value="ECO:0007669"/>
    <property type="project" value="UniProtKB-SubCell"/>
</dbReference>
<dbReference type="GO" id="GO:0005737">
    <property type="term" value="C:cytoplasm"/>
    <property type="evidence" value="ECO:0007669"/>
    <property type="project" value="UniProtKB-SubCell"/>
</dbReference>
<dbReference type="GO" id="GO:0003690">
    <property type="term" value="F:double-stranded DNA binding"/>
    <property type="evidence" value="ECO:0000314"/>
    <property type="project" value="UniProtKB"/>
</dbReference>
<dbReference type="GO" id="GO:0046982">
    <property type="term" value="F:protein heterodimerization activity"/>
    <property type="evidence" value="ECO:0000314"/>
    <property type="project" value="UniProtKB"/>
</dbReference>
<dbReference type="GO" id="GO:0042803">
    <property type="term" value="F:protein homodimerization activity"/>
    <property type="evidence" value="ECO:0000314"/>
    <property type="project" value="UniProtKB"/>
</dbReference>
<dbReference type="GO" id="GO:0006265">
    <property type="term" value="P:DNA topological change"/>
    <property type="evidence" value="ECO:0000314"/>
    <property type="project" value="UniProtKB"/>
</dbReference>
<dbReference type="GO" id="GO:0051260">
    <property type="term" value="P:protein homooligomerization"/>
    <property type="evidence" value="ECO:0000314"/>
    <property type="project" value="UniProtKB"/>
</dbReference>
<dbReference type="CDD" id="cd22909">
    <property type="entry name" value="HFD_archaea_histone-like"/>
    <property type="match status" value="1"/>
</dbReference>
<dbReference type="FunFam" id="1.10.20.10:FF:000185">
    <property type="entry name" value="DNA-binding protein HMf-2"/>
    <property type="match status" value="1"/>
</dbReference>
<dbReference type="Gene3D" id="1.10.20.10">
    <property type="entry name" value="Histone, subunit A"/>
    <property type="match status" value="1"/>
</dbReference>
<dbReference type="InterPro" id="IPR050947">
    <property type="entry name" value="Archaeal_histone_HMF"/>
</dbReference>
<dbReference type="InterPro" id="IPR003958">
    <property type="entry name" value="CBFA_NFYB_domain"/>
</dbReference>
<dbReference type="InterPro" id="IPR009072">
    <property type="entry name" value="Histone-fold"/>
</dbReference>
<dbReference type="InterPro" id="IPR050004">
    <property type="entry name" value="HmfB-like"/>
</dbReference>
<dbReference type="NCBIfam" id="NF043032">
    <property type="entry name" value="archaea_histone"/>
    <property type="match status" value="1"/>
</dbReference>
<dbReference type="PANTHER" id="PTHR47828">
    <property type="entry name" value="ARCHAEAL HISTONE A"/>
    <property type="match status" value="1"/>
</dbReference>
<dbReference type="PANTHER" id="PTHR47828:SF1">
    <property type="entry name" value="ARCHAEAL HISTONE A"/>
    <property type="match status" value="1"/>
</dbReference>
<dbReference type="Pfam" id="PF00808">
    <property type="entry name" value="CBFD_NFYB_HMF"/>
    <property type="match status" value="1"/>
</dbReference>
<dbReference type="SUPFAM" id="SSF47113">
    <property type="entry name" value="Histone-fold"/>
    <property type="match status" value="1"/>
</dbReference>
<organism>
    <name type="scientific">Methanothermus fervidus</name>
    <dbReference type="NCBI Taxonomy" id="2180"/>
    <lineage>
        <taxon>Archaea</taxon>
        <taxon>Methanobacteriati</taxon>
        <taxon>Methanobacteriota</taxon>
        <taxon>Methanomada group</taxon>
        <taxon>Methanobacteria</taxon>
        <taxon>Methanobacteriales</taxon>
        <taxon>Methanothermaceae</taxon>
        <taxon>Methanothermus</taxon>
    </lineage>
</organism>
<proteinExistence type="evidence at protein level"/>